<feature type="chain" id="PRO_1000044411" description="Sec-independent protein translocase protein TatA">
    <location>
        <begin position="1"/>
        <end position="79"/>
    </location>
</feature>
<feature type="transmembrane region" description="Helical" evidence="1">
    <location>
        <begin position="1"/>
        <end position="21"/>
    </location>
</feature>
<feature type="region of interest" description="Disordered" evidence="2">
    <location>
        <begin position="43"/>
        <end position="79"/>
    </location>
</feature>
<feature type="compositionally biased region" description="Basic and acidic residues" evidence="2">
    <location>
        <begin position="43"/>
        <end position="60"/>
    </location>
</feature>
<proteinExistence type="inferred from homology"/>
<evidence type="ECO:0000255" key="1">
    <source>
        <dbReference type="HAMAP-Rule" id="MF_00236"/>
    </source>
</evidence>
<evidence type="ECO:0000256" key="2">
    <source>
        <dbReference type="SAM" id="MobiDB-lite"/>
    </source>
</evidence>
<comment type="function">
    <text evidence="1">Part of the twin-arginine translocation (Tat) system that transports large folded proteins containing a characteristic twin-arginine motif in their signal peptide across membranes. TatA could form the protein-conducting channel of the Tat system.</text>
</comment>
<comment type="subunit">
    <text evidence="1">The Tat system comprises two distinct complexes: a TatABC complex, containing multiple copies of TatA, TatB and TatC subunits, and a separate TatA complex, containing only TatA subunits. Substrates initially bind to the TatABC complex, which probably triggers association of the separate TatA complex to form the active translocon.</text>
</comment>
<comment type="subcellular location">
    <subcellularLocation>
        <location evidence="1">Cell inner membrane</location>
        <topology evidence="1">Single-pass membrane protein</topology>
    </subcellularLocation>
</comment>
<comment type="similarity">
    <text evidence="1">Belongs to the TatA/E family.</text>
</comment>
<gene>
    <name evidence="1" type="primary">tatA</name>
    <name type="ordered locus">Nham_1788</name>
</gene>
<keyword id="KW-0997">Cell inner membrane</keyword>
<keyword id="KW-1003">Cell membrane</keyword>
<keyword id="KW-0472">Membrane</keyword>
<keyword id="KW-0653">Protein transport</keyword>
<keyword id="KW-1185">Reference proteome</keyword>
<keyword id="KW-0811">Translocation</keyword>
<keyword id="KW-0812">Transmembrane</keyword>
<keyword id="KW-1133">Transmembrane helix</keyword>
<keyword id="KW-0813">Transport</keyword>
<organism>
    <name type="scientific">Nitrobacter hamburgensis (strain DSM 10229 / NCIMB 13809 / X14)</name>
    <dbReference type="NCBI Taxonomy" id="323097"/>
    <lineage>
        <taxon>Bacteria</taxon>
        <taxon>Pseudomonadati</taxon>
        <taxon>Pseudomonadota</taxon>
        <taxon>Alphaproteobacteria</taxon>
        <taxon>Hyphomicrobiales</taxon>
        <taxon>Nitrobacteraceae</taxon>
        <taxon>Nitrobacter</taxon>
    </lineage>
</organism>
<reference key="1">
    <citation type="submission" date="2006-03" db="EMBL/GenBank/DDBJ databases">
        <title>Complete sequence of chromosome of Nitrobacter hamburgensis X14.</title>
        <authorList>
            <consortium name="US DOE Joint Genome Institute"/>
            <person name="Copeland A."/>
            <person name="Lucas S."/>
            <person name="Lapidus A."/>
            <person name="Barry K."/>
            <person name="Detter J.C."/>
            <person name="Glavina del Rio T."/>
            <person name="Hammon N."/>
            <person name="Israni S."/>
            <person name="Dalin E."/>
            <person name="Tice H."/>
            <person name="Pitluck S."/>
            <person name="Chain P."/>
            <person name="Malfatti S."/>
            <person name="Shin M."/>
            <person name="Vergez L."/>
            <person name="Schmutz J."/>
            <person name="Larimer F."/>
            <person name="Land M."/>
            <person name="Hauser L."/>
            <person name="Kyrpides N."/>
            <person name="Ivanova N."/>
            <person name="Ward B."/>
            <person name="Arp D."/>
            <person name="Klotz M."/>
            <person name="Stein L."/>
            <person name="O'Mullan G."/>
            <person name="Starkenburg S."/>
            <person name="Sayavedra L."/>
            <person name="Poret-Peterson A.T."/>
            <person name="Gentry M.E."/>
            <person name="Bruce D."/>
            <person name="Richardson P."/>
        </authorList>
    </citation>
    <scope>NUCLEOTIDE SEQUENCE [LARGE SCALE GENOMIC DNA]</scope>
    <source>
        <strain>DSM 10229 / NCIMB 13809 / X14</strain>
    </source>
</reference>
<dbReference type="EMBL" id="CP000319">
    <property type="protein sequence ID" value="ABE62602.1"/>
    <property type="molecule type" value="Genomic_DNA"/>
</dbReference>
<dbReference type="RefSeq" id="WP_011510284.1">
    <property type="nucleotide sequence ID" value="NC_007964.1"/>
</dbReference>
<dbReference type="SMR" id="Q1QME5"/>
<dbReference type="STRING" id="323097.Nham_1788"/>
<dbReference type="KEGG" id="nha:Nham_1788"/>
<dbReference type="eggNOG" id="COG1826">
    <property type="taxonomic scope" value="Bacteria"/>
</dbReference>
<dbReference type="HOGENOM" id="CLU_086034_5_0_5"/>
<dbReference type="OrthoDB" id="7161179at2"/>
<dbReference type="Proteomes" id="UP000001953">
    <property type="component" value="Chromosome"/>
</dbReference>
<dbReference type="GO" id="GO:0033281">
    <property type="term" value="C:TAT protein transport complex"/>
    <property type="evidence" value="ECO:0007669"/>
    <property type="project" value="UniProtKB-UniRule"/>
</dbReference>
<dbReference type="GO" id="GO:0008320">
    <property type="term" value="F:protein transmembrane transporter activity"/>
    <property type="evidence" value="ECO:0007669"/>
    <property type="project" value="UniProtKB-UniRule"/>
</dbReference>
<dbReference type="GO" id="GO:0043953">
    <property type="term" value="P:protein transport by the Tat complex"/>
    <property type="evidence" value="ECO:0007669"/>
    <property type="project" value="UniProtKB-UniRule"/>
</dbReference>
<dbReference type="Gene3D" id="1.20.5.3310">
    <property type="match status" value="1"/>
</dbReference>
<dbReference type="HAMAP" id="MF_00236">
    <property type="entry name" value="TatA_E"/>
    <property type="match status" value="1"/>
</dbReference>
<dbReference type="InterPro" id="IPR003369">
    <property type="entry name" value="TatA/B/E"/>
</dbReference>
<dbReference type="InterPro" id="IPR006312">
    <property type="entry name" value="TatA/E"/>
</dbReference>
<dbReference type="NCBIfam" id="NF001940">
    <property type="entry name" value="PRK00720.1"/>
    <property type="match status" value="1"/>
</dbReference>
<dbReference type="NCBIfam" id="TIGR01411">
    <property type="entry name" value="tatAE"/>
    <property type="match status" value="1"/>
</dbReference>
<dbReference type="PANTHER" id="PTHR42982">
    <property type="entry name" value="SEC-INDEPENDENT PROTEIN TRANSLOCASE PROTEIN TATA"/>
    <property type="match status" value="1"/>
</dbReference>
<dbReference type="PANTHER" id="PTHR42982:SF1">
    <property type="entry name" value="SEC-INDEPENDENT PROTEIN TRANSLOCASE PROTEIN TATA"/>
    <property type="match status" value="1"/>
</dbReference>
<dbReference type="Pfam" id="PF02416">
    <property type="entry name" value="TatA_B_E"/>
    <property type="match status" value="1"/>
</dbReference>
<sequence length="79" mass="8460">MGSLSIWHWIVVIAVILLLFGRGKISDLMGDVAQGIKAFKKGMQDDEKTAEKPEPVKTIDHNAPAPGASRSDVGSKTTV</sequence>
<accession>Q1QME5</accession>
<name>TATA_NITHX</name>
<protein>
    <recommendedName>
        <fullName evidence="1">Sec-independent protein translocase protein TatA</fullName>
    </recommendedName>
</protein>